<reference key="1">
    <citation type="journal article" date="2010" name="J. Bacteriol.">
        <title>Complete genome sequence of Beijerinckia indica subsp. indica.</title>
        <authorList>
            <person name="Tamas I."/>
            <person name="Dedysh S.N."/>
            <person name="Liesack W."/>
            <person name="Stott M.B."/>
            <person name="Alam M."/>
            <person name="Murrell J.C."/>
            <person name="Dunfield P.F."/>
        </authorList>
    </citation>
    <scope>NUCLEOTIDE SEQUENCE [LARGE SCALE GENOMIC DNA]</scope>
    <source>
        <strain>ATCC 9039 / DSM 1715 / NCIMB 8712</strain>
    </source>
</reference>
<accession>B2IK53</accession>
<gene>
    <name evidence="1" type="primary">rplJ</name>
    <name type="ordered locus">Bind_1345</name>
</gene>
<organism>
    <name type="scientific">Beijerinckia indica subsp. indica (strain ATCC 9039 / DSM 1715 / NCIMB 8712)</name>
    <dbReference type="NCBI Taxonomy" id="395963"/>
    <lineage>
        <taxon>Bacteria</taxon>
        <taxon>Pseudomonadati</taxon>
        <taxon>Pseudomonadota</taxon>
        <taxon>Alphaproteobacteria</taxon>
        <taxon>Hyphomicrobiales</taxon>
        <taxon>Beijerinckiaceae</taxon>
        <taxon>Beijerinckia</taxon>
    </lineage>
</organism>
<evidence type="ECO:0000255" key="1">
    <source>
        <dbReference type="HAMAP-Rule" id="MF_00362"/>
    </source>
</evidence>
<evidence type="ECO:0000305" key="2"/>
<comment type="function">
    <text evidence="1">Forms part of the ribosomal stalk, playing a central role in the interaction of the ribosome with GTP-bound translation factors.</text>
</comment>
<comment type="subunit">
    <text evidence="1">Part of the ribosomal stalk of the 50S ribosomal subunit. The N-terminus interacts with L11 and the large rRNA to form the base of the stalk. The C-terminus forms an elongated spine to which L12 dimers bind in a sequential fashion forming a multimeric L10(L12)X complex.</text>
</comment>
<comment type="similarity">
    <text evidence="1">Belongs to the universal ribosomal protein uL10 family.</text>
</comment>
<keyword id="KW-1185">Reference proteome</keyword>
<keyword id="KW-0687">Ribonucleoprotein</keyword>
<keyword id="KW-0689">Ribosomal protein</keyword>
<keyword id="KW-0694">RNA-binding</keyword>
<keyword id="KW-0699">rRNA-binding</keyword>
<proteinExistence type="inferred from homology"/>
<dbReference type="EMBL" id="CP001016">
    <property type="protein sequence ID" value="ACB94985.1"/>
    <property type="molecule type" value="Genomic_DNA"/>
</dbReference>
<dbReference type="RefSeq" id="WP_012384342.1">
    <property type="nucleotide sequence ID" value="NC_010581.1"/>
</dbReference>
<dbReference type="SMR" id="B2IK53"/>
<dbReference type="STRING" id="395963.Bind_1345"/>
<dbReference type="KEGG" id="bid:Bind_1345"/>
<dbReference type="eggNOG" id="COG0244">
    <property type="taxonomic scope" value="Bacteria"/>
</dbReference>
<dbReference type="HOGENOM" id="CLU_092227_0_0_5"/>
<dbReference type="OrthoDB" id="9791972at2"/>
<dbReference type="Proteomes" id="UP000001695">
    <property type="component" value="Chromosome"/>
</dbReference>
<dbReference type="GO" id="GO:0015934">
    <property type="term" value="C:large ribosomal subunit"/>
    <property type="evidence" value="ECO:0007669"/>
    <property type="project" value="InterPro"/>
</dbReference>
<dbReference type="GO" id="GO:0070180">
    <property type="term" value="F:large ribosomal subunit rRNA binding"/>
    <property type="evidence" value="ECO:0007669"/>
    <property type="project" value="UniProtKB-UniRule"/>
</dbReference>
<dbReference type="GO" id="GO:0003735">
    <property type="term" value="F:structural constituent of ribosome"/>
    <property type="evidence" value="ECO:0007669"/>
    <property type="project" value="InterPro"/>
</dbReference>
<dbReference type="GO" id="GO:0006412">
    <property type="term" value="P:translation"/>
    <property type="evidence" value="ECO:0007669"/>
    <property type="project" value="UniProtKB-UniRule"/>
</dbReference>
<dbReference type="CDD" id="cd05797">
    <property type="entry name" value="Ribosomal_L10"/>
    <property type="match status" value="1"/>
</dbReference>
<dbReference type="Gene3D" id="3.30.70.1730">
    <property type="match status" value="1"/>
</dbReference>
<dbReference type="Gene3D" id="6.10.250.290">
    <property type="match status" value="1"/>
</dbReference>
<dbReference type="HAMAP" id="MF_00362">
    <property type="entry name" value="Ribosomal_uL10"/>
    <property type="match status" value="1"/>
</dbReference>
<dbReference type="InterPro" id="IPR001790">
    <property type="entry name" value="Ribosomal_uL10"/>
</dbReference>
<dbReference type="InterPro" id="IPR043141">
    <property type="entry name" value="Ribosomal_uL10-like_sf"/>
</dbReference>
<dbReference type="InterPro" id="IPR022973">
    <property type="entry name" value="Ribosomal_uL10_bac"/>
</dbReference>
<dbReference type="InterPro" id="IPR047865">
    <property type="entry name" value="Ribosomal_uL10_bac_type"/>
</dbReference>
<dbReference type="InterPro" id="IPR002363">
    <property type="entry name" value="Ribosomal_uL10_CS_bac"/>
</dbReference>
<dbReference type="NCBIfam" id="NF000955">
    <property type="entry name" value="PRK00099.1-1"/>
    <property type="match status" value="1"/>
</dbReference>
<dbReference type="PANTHER" id="PTHR11560">
    <property type="entry name" value="39S RIBOSOMAL PROTEIN L10, MITOCHONDRIAL"/>
    <property type="match status" value="1"/>
</dbReference>
<dbReference type="Pfam" id="PF00466">
    <property type="entry name" value="Ribosomal_L10"/>
    <property type="match status" value="1"/>
</dbReference>
<dbReference type="SUPFAM" id="SSF160369">
    <property type="entry name" value="Ribosomal protein L10-like"/>
    <property type="match status" value="1"/>
</dbReference>
<dbReference type="PROSITE" id="PS01109">
    <property type="entry name" value="RIBOSOMAL_L10"/>
    <property type="match status" value="1"/>
</dbReference>
<protein>
    <recommendedName>
        <fullName evidence="1">Large ribosomal subunit protein uL10</fullName>
    </recommendedName>
    <alternativeName>
        <fullName evidence="2">50S ribosomal protein L10</fullName>
    </alternativeName>
</protein>
<sequence>MDRAEKKESVAALADVFQKTSVVVVAHYSGLTVAQMQNLRKQMRASGATVQVAKNRLVKIALDGTPVSSISPLLKGPTLIAYSDDPVAAPKVAVGFAKDHDKFVILGGAMGTTALNVDGVRSLATMPSLDELRGKLVGLIQAPATKLAQLTTAPAAKLARVFGAYAAKDDAA</sequence>
<name>RL10_BEII9</name>
<feature type="chain" id="PRO_1000120918" description="Large ribosomal subunit protein uL10">
    <location>
        <begin position="1"/>
        <end position="172"/>
    </location>
</feature>